<organism>
    <name type="scientific">Nostoc punctiforme (strain ATCC 29133 / PCC 73102)</name>
    <dbReference type="NCBI Taxonomy" id="63737"/>
    <lineage>
        <taxon>Bacteria</taxon>
        <taxon>Bacillati</taxon>
        <taxon>Cyanobacteriota</taxon>
        <taxon>Cyanophyceae</taxon>
        <taxon>Nostocales</taxon>
        <taxon>Nostocaceae</taxon>
        <taxon>Nostoc</taxon>
    </lineage>
</organism>
<name>MENG_NOSP7</name>
<protein>
    <recommendedName>
        <fullName evidence="1">2-phytyl-1,4-naphtoquinone methyltransferase</fullName>
        <ecNumber evidence="1">2.1.1.329</ecNumber>
    </recommendedName>
    <alternativeName>
        <fullName evidence="1">Demethylphylloquinone methyltransferase</fullName>
    </alternativeName>
</protein>
<accession>B2IUM7</accession>
<keyword id="KW-0489">Methyltransferase</keyword>
<keyword id="KW-1185">Reference proteome</keyword>
<keyword id="KW-0949">S-adenosyl-L-methionine</keyword>
<keyword id="KW-0808">Transferase</keyword>
<sequence length="230" mass="25739">MTNEVQSIFNRIAPVYDQLNDWLSLGQHRIWKEMAVKWSAAKSGNTALDLCCGSGDLALRLARRVGATGYVYGVDFSCNLLETAKERSQKQYPQPAIAWVEADVLNLPFDDNQFDAATMGYGLRNVKDIPRSLQELHRVLKPGAKAAILDFHRPSNPQLRAFQQLYLNSFVVPVANYLGLKEEYAYISPSLDRFPIGKEQIELARQVGFAVATHYPIANGMMGVLVVSKF</sequence>
<reference key="1">
    <citation type="journal article" date="2013" name="Plant Physiol.">
        <title>A Nostoc punctiforme Sugar Transporter Necessary to Establish a Cyanobacterium-Plant Symbiosis.</title>
        <authorList>
            <person name="Ekman M."/>
            <person name="Picossi S."/>
            <person name="Campbell E.L."/>
            <person name="Meeks J.C."/>
            <person name="Flores E."/>
        </authorList>
    </citation>
    <scope>NUCLEOTIDE SEQUENCE [LARGE SCALE GENOMIC DNA]</scope>
    <source>
        <strain>ATCC 29133 / PCC 73102</strain>
    </source>
</reference>
<evidence type="ECO:0000255" key="1">
    <source>
        <dbReference type="HAMAP-Rule" id="MF_01982"/>
    </source>
</evidence>
<dbReference type="EC" id="2.1.1.329" evidence="1"/>
<dbReference type="EMBL" id="CP001037">
    <property type="protein sequence ID" value="ACC82802.1"/>
    <property type="molecule type" value="Genomic_DNA"/>
</dbReference>
<dbReference type="RefSeq" id="WP_012410763.1">
    <property type="nucleotide sequence ID" value="NC_010628.1"/>
</dbReference>
<dbReference type="SMR" id="B2IUM7"/>
<dbReference type="STRING" id="63737.Npun_R4434"/>
<dbReference type="EnsemblBacteria" id="ACC82802">
    <property type="protein sequence ID" value="ACC82802"/>
    <property type="gene ID" value="Npun_R4434"/>
</dbReference>
<dbReference type="KEGG" id="npu:Npun_R4434"/>
<dbReference type="eggNOG" id="COG2226">
    <property type="taxonomic scope" value="Bacteria"/>
</dbReference>
<dbReference type="HOGENOM" id="CLU_037990_0_0_3"/>
<dbReference type="OrthoDB" id="9808140at2"/>
<dbReference type="PhylomeDB" id="B2IUM7"/>
<dbReference type="UniPathway" id="UPA00995"/>
<dbReference type="Proteomes" id="UP000001191">
    <property type="component" value="Chromosome"/>
</dbReference>
<dbReference type="GO" id="GO:0052624">
    <property type="term" value="F:2-phytyl-1,4-naphthoquinone methyltransferase activity"/>
    <property type="evidence" value="ECO:0007669"/>
    <property type="project" value="UniProtKB-EC"/>
</dbReference>
<dbReference type="GO" id="GO:0032259">
    <property type="term" value="P:methylation"/>
    <property type="evidence" value="ECO:0007669"/>
    <property type="project" value="UniProtKB-KW"/>
</dbReference>
<dbReference type="GO" id="GO:0042372">
    <property type="term" value="P:phylloquinone biosynthetic process"/>
    <property type="evidence" value="ECO:0007669"/>
    <property type="project" value="UniProtKB-UniRule"/>
</dbReference>
<dbReference type="CDD" id="cd02440">
    <property type="entry name" value="AdoMet_MTases"/>
    <property type="match status" value="1"/>
</dbReference>
<dbReference type="Gene3D" id="3.40.50.150">
    <property type="entry name" value="Vaccinia Virus protein VP39"/>
    <property type="match status" value="1"/>
</dbReference>
<dbReference type="HAMAP" id="MF_01982">
    <property type="entry name" value="MenG_phylloquinone_subfam"/>
    <property type="match status" value="1"/>
</dbReference>
<dbReference type="HAMAP" id="MF_01813">
    <property type="entry name" value="MenG_UbiE_methyltr"/>
    <property type="match status" value="1"/>
</dbReference>
<dbReference type="InterPro" id="IPR032904">
    <property type="entry name" value="MenG"/>
</dbReference>
<dbReference type="InterPro" id="IPR029063">
    <property type="entry name" value="SAM-dependent_MTases_sf"/>
</dbReference>
<dbReference type="InterPro" id="IPR004033">
    <property type="entry name" value="UbiE/COQ5_MeTrFase"/>
</dbReference>
<dbReference type="InterPro" id="IPR023576">
    <property type="entry name" value="UbiE/COQ5_MeTrFase_CS"/>
</dbReference>
<dbReference type="NCBIfam" id="TIGR01934">
    <property type="entry name" value="MenG_MenH_UbiE"/>
    <property type="match status" value="1"/>
</dbReference>
<dbReference type="NCBIfam" id="NF001244">
    <property type="entry name" value="PRK00216.1-5"/>
    <property type="match status" value="1"/>
</dbReference>
<dbReference type="PANTHER" id="PTHR43591:SF24">
    <property type="entry name" value="2-METHOXY-6-POLYPRENYL-1,4-BENZOQUINOL METHYLASE, MITOCHONDRIAL"/>
    <property type="match status" value="1"/>
</dbReference>
<dbReference type="PANTHER" id="PTHR43591">
    <property type="entry name" value="METHYLTRANSFERASE"/>
    <property type="match status" value="1"/>
</dbReference>
<dbReference type="Pfam" id="PF01209">
    <property type="entry name" value="Ubie_methyltran"/>
    <property type="match status" value="1"/>
</dbReference>
<dbReference type="SUPFAM" id="SSF53335">
    <property type="entry name" value="S-adenosyl-L-methionine-dependent methyltransferases"/>
    <property type="match status" value="1"/>
</dbReference>
<dbReference type="PROSITE" id="PS51608">
    <property type="entry name" value="SAM_MT_UBIE"/>
    <property type="match status" value="1"/>
</dbReference>
<dbReference type="PROSITE" id="PS01183">
    <property type="entry name" value="UBIE_1"/>
    <property type="match status" value="1"/>
</dbReference>
<comment type="function">
    <text evidence="1">Methyltransferase required for the conversion of 2-phytyl-1,4-beta-naphthoquinol to phylloquinol.</text>
</comment>
<comment type="catalytic activity">
    <reaction evidence="1">
        <text>demethylphylloquinol + S-adenosyl-L-methionine = phylloquinol + S-adenosyl-L-homocysteine + H(+)</text>
        <dbReference type="Rhea" id="RHEA:40551"/>
        <dbReference type="ChEBI" id="CHEBI:15378"/>
        <dbReference type="ChEBI" id="CHEBI:28433"/>
        <dbReference type="ChEBI" id="CHEBI:57856"/>
        <dbReference type="ChEBI" id="CHEBI:59789"/>
        <dbReference type="ChEBI" id="CHEBI:87844"/>
        <dbReference type="EC" id="2.1.1.329"/>
    </reaction>
</comment>
<comment type="pathway">
    <text evidence="1">Cofactor biosynthesis; phylloquinone biosynthesis.</text>
</comment>
<comment type="similarity">
    <text evidence="1">Belongs to the class I-like SAM-binding methyltransferase superfamily. MenG/UbiE family.</text>
</comment>
<gene>
    <name evidence="1" type="primary">menG</name>
    <name type="ordered locus">Npun_R4434</name>
</gene>
<feature type="chain" id="PRO_1000187782" description="2-phytyl-1,4-naphtoquinone methyltransferase">
    <location>
        <begin position="1"/>
        <end position="230"/>
    </location>
</feature>
<proteinExistence type="inferred from homology"/>